<evidence type="ECO:0000255" key="1">
    <source>
        <dbReference type="HAMAP-Rule" id="MF_00514"/>
    </source>
</evidence>
<evidence type="ECO:0000256" key="2">
    <source>
        <dbReference type="SAM" id="MobiDB-lite"/>
    </source>
</evidence>
<evidence type="ECO:0000305" key="3"/>
<reference key="1">
    <citation type="journal article" date="2005" name="Proc. Natl. Acad. Sci. U.S.A.">
        <title>The genome of the heartwater agent Ehrlichia ruminantium contains multiple tandem repeats of actively variable copy number.</title>
        <authorList>
            <person name="Collins N.E."/>
            <person name="Liebenberg J."/>
            <person name="de Villiers E.P."/>
            <person name="Brayton K.A."/>
            <person name="Louw E."/>
            <person name="Pretorius A."/>
            <person name="Faber F.E."/>
            <person name="van Heerden H."/>
            <person name="Josemans A."/>
            <person name="van Kleef M."/>
            <person name="Steyn H.C."/>
            <person name="van Strijp M.F."/>
            <person name="Zweygarth E."/>
            <person name="Jongejan F."/>
            <person name="Maillard J.C."/>
            <person name="Berthier D."/>
            <person name="Botha M."/>
            <person name="Joubert F."/>
            <person name="Corton C.H."/>
            <person name="Thomson N.R."/>
            <person name="Allsopp M.T."/>
            <person name="Allsopp B.A."/>
        </authorList>
    </citation>
    <scope>NUCLEOTIDE SEQUENCE [LARGE SCALE GENOMIC DNA]</scope>
    <source>
        <strain>Welgevonden</strain>
    </source>
</reference>
<reference key="2">
    <citation type="journal article" date="2006" name="J. Bacteriol.">
        <title>Comparative genomic analysis of three strains of Ehrlichia ruminantium reveals an active process of genome size plasticity.</title>
        <authorList>
            <person name="Frutos R."/>
            <person name="Viari A."/>
            <person name="Ferraz C."/>
            <person name="Morgat A."/>
            <person name="Eychenie S."/>
            <person name="Kandassamy Y."/>
            <person name="Chantal I."/>
            <person name="Bensaid A."/>
            <person name="Coissac E."/>
            <person name="Vachiery N."/>
            <person name="Demaille J."/>
            <person name="Martinez D."/>
        </authorList>
    </citation>
    <scope>NUCLEOTIDE SEQUENCE [LARGE SCALE GENOMIC DNA]</scope>
    <source>
        <strain>Welgevonden</strain>
    </source>
</reference>
<accession>Q5HC38</accession>
<accession>Q5FCU9</accession>
<gene>
    <name evidence="1" type="primary">rpmI</name>
    <name type="ordered locus">Erum1380</name>
    <name type="ordered locus">ERWE_CDS_01340</name>
</gene>
<proteinExistence type="inferred from homology"/>
<dbReference type="EMBL" id="CR767821">
    <property type="protein sequence ID" value="CAH57854.1"/>
    <property type="molecule type" value="Genomic_DNA"/>
</dbReference>
<dbReference type="EMBL" id="CR925678">
    <property type="protein sequence ID" value="CAI26628.1"/>
    <property type="molecule type" value="Genomic_DNA"/>
</dbReference>
<dbReference type="RefSeq" id="WP_011154822.1">
    <property type="nucleotide sequence ID" value="NC_005295.2"/>
</dbReference>
<dbReference type="SMR" id="Q5HC38"/>
<dbReference type="GeneID" id="33058228"/>
<dbReference type="KEGG" id="eru:Erum1380"/>
<dbReference type="KEGG" id="erw:ERWE_CDS_01340"/>
<dbReference type="eggNOG" id="COG0291">
    <property type="taxonomic scope" value="Bacteria"/>
</dbReference>
<dbReference type="HOGENOM" id="CLU_169643_2_1_5"/>
<dbReference type="Proteomes" id="UP000001021">
    <property type="component" value="Chromosome"/>
</dbReference>
<dbReference type="GO" id="GO:0022625">
    <property type="term" value="C:cytosolic large ribosomal subunit"/>
    <property type="evidence" value="ECO:0007669"/>
    <property type="project" value="TreeGrafter"/>
</dbReference>
<dbReference type="GO" id="GO:0003735">
    <property type="term" value="F:structural constituent of ribosome"/>
    <property type="evidence" value="ECO:0007669"/>
    <property type="project" value="InterPro"/>
</dbReference>
<dbReference type="GO" id="GO:0006412">
    <property type="term" value="P:translation"/>
    <property type="evidence" value="ECO:0007669"/>
    <property type="project" value="UniProtKB-UniRule"/>
</dbReference>
<dbReference type="FunFam" id="4.10.410.60:FF:000001">
    <property type="entry name" value="50S ribosomal protein L35"/>
    <property type="match status" value="1"/>
</dbReference>
<dbReference type="Gene3D" id="4.10.410.60">
    <property type="match status" value="1"/>
</dbReference>
<dbReference type="HAMAP" id="MF_00514">
    <property type="entry name" value="Ribosomal_bL35"/>
    <property type="match status" value="1"/>
</dbReference>
<dbReference type="InterPro" id="IPR001706">
    <property type="entry name" value="Ribosomal_bL35"/>
</dbReference>
<dbReference type="InterPro" id="IPR021137">
    <property type="entry name" value="Ribosomal_bL35-like"/>
</dbReference>
<dbReference type="InterPro" id="IPR018265">
    <property type="entry name" value="Ribosomal_bL35_CS"/>
</dbReference>
<dbReference type="InterPro" id="IPR037229">
    <property type="entry name" value="Ribosomal_bL35_sf"/>
</dbReference>
<dbReference type="NCBIfam" id="TIGR00001">
    <property type="entry name" value="rpmI_bact"/>
    <property type="match status" value="1"/>
</dbReference>
<dbReference type="PANTHER" id="PTHR33343">
    <property type="entry name" value="54S RIBOSOMAL PROTEIN BL35M"/>
    <property type="match status" value="1"/>
</dbReference>
<dbReference type="PANTHER" id="PTHR33343:SF1">
    <property type="entry name" value="LARGE RIBOSOMAL SUBUNIT PROTEIN BL35M"/>
    <property type="match status" value="1"/>
</dbReference>
<dbReference type="Pfam" id="PF01632">
    <property type="entry name" value="Ribosomal_L35p"/>
    <property type="match status" value="1"/>
</dbReference>
<dbReference type="PRINTS" id="PR00064">
    <property type="entry name" value="RIBOSOMALL35"/>
</dbReference>
<dbReference type="SUPFAM" id="SSF143034">
    <property type="entry name" value="L35p-like"/>
    <property type="match status" value="1"/>
</dbReference>
<dbReference type="PROSITE" id="PS00936">
    <property type="entry name" value="RIBOSOMAL_L35"/>
    <property type="match status" value="1"/>
</dbReference>
<feature type="chain" id="PRO_0000258676" description="Large ribosomal subunit protein bL35">
    <location>
        <begin position="1"/>
        <end position="66"/>
    </location>
</feature>
<feature type="region of interest" description="Disordered" evidence="2">
    <location>
        <begin position="18"/>
        <end position="41"/>
    </location>
</feature>
<feature type="compositionally biased region" description="Polar residues" evidence="2">
    <location>
        <begin position="18"/>
        <end position="27"/>
    </location>
</feature>
<feature type="compositionally biased region" description="Basic residues" evidence="2">
    <location>
        <begin position="28"/>
        <end position="41"/>
    </location>
</feature>
<organism>
    <name type="scientific">Ehrlichia ruminantium (strain Welgevonden)</name>
    <dbReference type="NCBI Taxonomy" id="254945"/>
    <lineage>
        <taxon>Bacteria</taxon>
        <taxon>Pseudomonadati</taxon>
        <taxon>Pseudomonadota</taxon>
        <taxon>Alphaproteobacteria</taxon>
        <taxon>Rickettsiales</taxon>
        <taxon>Anaplasmataceae</taxon>
        <taxon>Ehrlichia</taxon>
    </lineage>
</organism>
<sequence length="66" mass="7572">MPKLKTKSSVKKRFSVTATGKIKSTQSAKRHGMTKRSKRSIRVQRGTTVMNQSDSRIIKLFMPYSR</sequence>
<keyword id="KW-0687">Ribonucleoprotein</keyword>
<keyword id="KW-0689">Ribosomal protein</keyword>
<protein>
    <recommendedName>
        <fullName evidence="1">Large ribosomal subunit protein bL35</fullName>
    </recommendedName>
    <alternativeName>
        <fullName evidence="3">50S ribosomal protein L35</fullName>
    </alternativeName>
</protein>
<comment type="similarity">
    <text evidence="1">Belongs to the bacterial ribosomal protein bL35 family.</text>
</comment>
<name>RL35_EHRRW</name>